<feature type="chain" id="PRO_0000121431" description="Protein nucleotidyltransferase YdiU">
    <location>
        <begin position="1"/>
        <end position="492"/>
    </location>
</feature>
<feature type="active site" description="Proton acceptor" evidence="1">
    <location>
        <position position="256"/>
    </location>
</feature>
<feature type="binding site" evidence="1">
    <location>
        <position position="91"/>
    </location>
    <ligand>
        <name>ATP</name>
        <dbReference type="ChEBI" id="CHEBI:30616"/>
    </ligand>
</feature>
<feature type="binding site" evidence="1">
    <location>
        <position position="93"/>
    </location>
    <ligand>
        <name>ATP</name>
        <dbReference type="ChEBI" id="CHEBI:30616"/>
    </ligand>
</feature>
<feature type="binding site" evidence="1">
    <location>
        <position position="94"/>
    </location>
    <ligand>
        <name>ATP</name>
        <dbReference type="ChEBI" id="CHEBI:30616"/>
    </ligand>
</feature>
<feature type="binding site" evidence="1">
    <location>
        <position position="114"/>
    </location>
    <ligand>
        <name>ATP</name>
        <dbReference type="ChEBI" id="CHEBI:30616"/>
    </ligand>
</feature>
<feature type="binding site" evidence="1">
    <location>
        <position position="126"/>
    </location>
    <ligand>
        <name>ATP</name>
        <dbReference type="ChEBI" id="CHEBI:30616"/>
    </ligand>
</feature>
<feature type="binding site" evidence="1">
    <location>
        <position position="127"/>
    </location>
    <ligand>
        <name>ATP</name>
        <dbReference type="ChEBI" id="CHEBI:30616"/>
    </ligand>
</feature>
<feature type="binding site" evidence="1">
    <location>
        <position position="180"/>
    </location>
    <ligand>
        <name>ATP</name>
        <dbReference type="ChEBI" id="CHEBI:30616"/>
    </ligand>
</feature>
<feature type="binding site" evidence="1">
    <location>
        <position position="187"/>
    </location>
    <ligand>
        <name>ATP</name>
        <dbReference type="ChEBI" id="CHEBI:30616"/>
    </ligand>
</feature>
<feature type="binding site" evidence="1">
    <location>
        <position position="257"/>
    </location>
    <ligand>
        <name>Mg(2+)</name>
        <dbReference type="ChEBI" id="CHEBI:18420"/>
    </ligand>
</feature>
<feature type="binding site" evidence="1">
    <location>
        <position position="266"/>
    </location>
    <ligand>
        <name>ATP</name>
        <dbReference type="ChEBI" id="CHEBI:30616"/>
    </ligand>
</feature>
<feature type="binding site" evidence="1">
    <location>
        <position position="266"/>
    </location>
    <ligand>
        <name>Mg(2+)</name>
        <dbReference type="ChEBI" id="CHEBI:18420"/>
    </ligand>
</feature>
<feature type="sequence conflict" description="In Ref. 1; AAM82657." evidence="2" ref="1">
    <original>LYGQVRGRNGWLYDFGTKGSGR</original>
    <variation>STAKYVDATAGSTTLALRDRPN</variation>
    <location>
        <begin position="97"/>
        <end position="118"/>
    </location>
</feature>
<accession>Q8KPU0</accession>
<accession>Q31MV5</accession>
<comment type="function">
    <text evidence="1">Nucleotidyltransferase involved in the post-translational modification of proteins. It can catalyze the addition of adenosine monophosphate (AMP) or uridine monophosphate (UMP) to a protein, resulting in modifications known as AMPylation and UMPylation.</text>
</comment>
<comment type="catalytic activity">
    <reaction evidence="1">
        <text>L-seryl-[protein] + ATP = 3-O-(5'-adenylyl)-L-seryl-[protein] + diphosphate</text>
        <dbReference type="Rhea" id="RHEA:58120"/>
        <dbReference type="Rhea" id="RHEA-COMP:9863"/>
        <dbReference type="Rhea" id="RHEA-COMP:15073"/>
        <dbReference type="ChEBI" id="CHEBI:29999"/>
        <dbReference type="ChEBI" id="CHEBI:30616"/>
        <dbReference type="ChEBI" id="CHEBI:33019"/>
        <dbReference type="ChEBI" id="CHEBI:142516"/>
        <dbReference type="EC" id="2.7.7.108"/>
    </reaction>
</comment>
<comment type="catalytic activity">
    <reaction evidence="1">
        <text>L-threonyl-[protein] + ATP = 3-O-(5'-adenylyl)-L-threonyl-[protein] + diphosphate</text>
        <dbReference type="Rhea" id="RHEA:54292"/>
        <dbReference type="Rhea" id="RHEA-COMP:11060"/>
        <dbReference type="Rhea" id="RHEA-COMP:13847"/>
        <dbReference type="ChEBI" id="CHEBI:30013"/>
        <dbReference type="ChEBI" id="CHEBI:30616"/>
        <dbReference type="ChEBI" id="CHEBI:33019"/>
        <dbReference type="ChEBI" id="CHEBI:138113"/>
        <dbReference type="EC" id="2.7.7.108"/>
    </reaction>
</comment>
<comment type="catalytic activity">
    <reaction evidence="1">
        <text>L-tyrosyl-[protein] + ATP = O-(5'-adenylyl)-L-tyrosyl-[protein] + diphosphate</text>
        <dbReference type="Rhea" id="RHEA:54288"/>
        <dbReference type="Rhea" id="RHEA-COMP:10136"/>
        <dbReference type="Rhea" id="RHEA-COMP:13846"/>
        <dbReference type="ChEBI" id="CHEBI:30616"/>
        <dbReference type="ChEBI" id="CHEBI:33019"/>
        <dbReference type="ChEBI" id="CHEBI:46858"/>
        <dbReference type="ChEBI" id="CHEBI:83624"/>
        <dbReference type="EC" id="2.7.7.108"/>
    </reaction>
</comment>
<comment type="catalytic activity">
    <reaction evidence="1">
        <text>L-histidyl-[protein] + UTP = N(tele)-(5'-uridylyl)-L-histidyl-[protein] + diphosphate</text>
        <dbReference type="Rhea" id="RHEA:83891"/>
        <dbReference type="Rhea" id="RHEA-COMP:9745"/>
        <dbReference type="Rhea" id="RHEA-COMP:20239"/>
        <dbReference type="ChEBI" id="CHEBI:29979"/>
        <dbReference type="ChEBI" id="CHEBI:33019"/>
        <dbReference type="ChEBI" id="CHEBI:46398"/>
        <dbReference type="ChEBI" id="CHEBI:233474"/>
    </reaction>
</comment>
<comment type="catalytic activity">
    <reaction evidence="1">
        <text>L-seryl-[protein] + UTP = O-(5'-uridylyl)-L-seryl-[protein] + diphosphate</text>
        <dbReference type="Rhea" id="RHEA:64604"/>
        <dbReference type="Rhea" id="RHEA-COMP:9863"/>
        <dbReference type="Rhea" id="RHEA-COMP:16635"/>
        <dbReference type="ChEBI" id="CHEBI:29999"/>
        <dbReference type="ChEBI" id="CHEBI:33019"/>
        <dbReference type="ChEBI" id="CHEBI:46398"/>
        <dbReference type="ChEBI" id="CHEBI:156051"/>
    </reaction>
</comment>
<comment type="catalytic activity">
    <reaction evidence="1">
        <text>L-tyrosyl-[protein] + UTP = O-(5'-uridylyl)-L-tyrosyl-[protein] + diphosphate</text>
        <dbReference type="Rhea" id="RHEA:83887"/>
        <dbReference type="Rhea" id="RHEA-COMP:10136"/>
        <dbReference type="Rhea" id="RHEA-COMP:20238"/>
        <dbReference type="ChEBI" id="CHEBI:33019"/>
        <dbReference type="ChEBI" id="CHEBI:46398"/>
        <dbReference type="ChEBI" id="CHEBI:46858"/>
        <dbReference type="ChEBI" id="CHEBI:90602"/>
    </reaction>
</comment>
<comment type="cofactor">
    <cofactor evidence="1">
        <name>Mg(2+)</name>
        <dbReference type="ChEBI" id="CHEBI:18420"/>
    </cofactor>
    <cofactor evidence="1">
        <name>Mn(2+)</name>
        <dbReference type="ChEBI" id="CHEBI:29035"/>
    </cofactor>
</comment>
<comment type="similarity">
    <text evidence="1">Belongs to the SELO family.</text>
</comment>
<name>SELO_SYNE7</name>
<protein>
    <recommendedName>
        <fullName evidence="1">Protein nucleotidyltransferase YdiU</fullName>
        <ecNumber evidence="1">2.7.7.-</ecNumber>
    </recommendedName>
    <alternativeName>
        <fullName evidence="1">Protein adenylyltransferase YdiU</fullName>
        <ecNumber evidence="1">2.7.7.108</ecNumber>
    </alternativeName>
    <alternativeName>
        <fullName evidence="1">Protein uridylyltransferase YdiU</fullName>
        <ecNumber evidence="1">2.7.7.-</ecNumber>
    </alternativeName>
</protein>
<evidence type="ECO:0000255" key="1">
    <source>
        <dbReference type="HAMAP-Rule" id="MF_00692"/>
    </source>
</evidence>
<evidence type="ECO:0000305" key="2"/>
<organism>
    <name type="scientific">Synechococcus elongatus (strain ATCC 33912 / PCC 7942 / FACHB-805)</name>
    <name type="common">Anacystis nidulans R2</name>
    <dbReference type="NCBI Taxonomy" id="1140"/>
    <lineage>
        <taxon>Bacteria</taxon>
        <taxon>Bacillati</taxon>
        <taxon>Cyanobacteriota</taxon>
        <taxon>Cyanophyceae</taxon>
        <taxon>Synechococcales</taxon>
        <taxon>Synechococcaceae</taxon>
        <taxon>Synechococcus</taxon>
    </lineage>
</organism>
<keyword id="KW-0067">ATP-binding</keyword>
<keyword id="KW-0460">Magnesium</keyword>
<keyword id="KW-0464">Manganese</keyword>
<keyword id="KW-0479">Metal-binding</keyword>
<keyword id="KW-0547">Nucleotide-binding</keyword>
<keyword id="KW-0548">Nucleotidyltransferase</keyword>
<keyword id="KW-1185">Reference proteome</keyword>
<keyword id="KW-0808">Transferase</keyword>
<proteinExistence type="inferred from homology"/>
<gene>
    <name evidence="1" type="primary">ydiU</name>
    <name evidence="1" type="synonym">selO</name>
    <name type="ordered locus">Synpcc7942_1584</name>
    <name type="ORF">sed0018</name>
</gene>
<reference key="1">
    <citation type="submission" date="2002-06" db="EMBL/GenBank/DDBJ databases">
        <title>Synechococcus elongatus PCC7942 cosmid 6C3.</title>
        <authorList>
            <person name="Holtman C.K."/>
            <person name="Sandoval P."/>
            <person name="Chen Y."/>
            <person name="Socias T."/>
            <person name="Mohler B.J."/>
            <person name="Gonzalez A."/>
            <person name="Salinas I."/>
            <person name="McMurtry S."/>
            <person name="Golden S.S."/>
            <person name="Youderian P."/>
        </authorList>
    </citation>
    <scope>NUCLEOTIDE SEQUENCE [GENOMIC DNA]</scope>
</reference>
<reference key="2">
    <citation type="submission" date="2005-08" db="EMBL/GenBank/DDBJ databases">
        <title>Complete sequence of chromosome 1 of Synechococcus elongatus PCC 7942.</title>
        <authorList>
            <consortium name="US DOE Joint Genome Institute"/>
            <person name="Copeland A."/>
            <person name="Lucas S."/>
            <person name="Lapidus A."/>
            <person name="Barry K."/>
            <person name="Detter J.C."/>
            <person name="Glavina T."/>
            <person name="Hammon N."/>
            <person name="Israni S."/>
            <person name="Pitluck S."/>
            <person name="Schmutz J."/>
            <person name="Larimer F."/>
            <person name="Land M."/>
            <person name="Kyrpides N."/>
            <person name="Lykidis A."/>
            <person name="Golden S."/>
            <person name="Richardson P."/>
        </authorList>
    </citation>
    <scope>NUCLEOTIDE SEQUENCE [LARGE SCALE GENOMIC DNA]</scope>
    <source>
        <strain>ATCC 33912 / PCC 7942 / FACHB-805</strain>
    </source>
</reference>
<sequence>MPSTNPFLTLPYEPAFASLGSEFSDPVEAATFPAHQLRFRNDRLLPILGLDPATVTDEHFIEAFGRFQGRSPLLAMRYHGYQFGIYNPDLGDGRGFLYGQVRGRNGWLYDFGTKGSGRTPYSRGGDGKLTLKGGVREVLASEFLQRLGVRTGRCLSLIETGEELWRGDEPSPTRSSVMVRFNRTHIRFGTFERLHYFKRADLVRQLLDHVIATYYSHLLGDPEADAKFYAELTERTADLAAQWMAAGFCHAVLNTDNLSIVGESFDYGPWAFLDRFDPKFTAAYFDHSGRYRYENQPGICQLNLELLQVPLGMVMSAADLEAGIAGFGDRYQATYSRLMLRRLGFEADQLHSAIADDLIITTLQLLLRAPIGYNEFFARLRAQFQPSWRSDLSAILPDWITTDLEALPEAQWQGWRDRYHQLLTHLPESQLPLIQQQLAQANPEIAPIRPVVESVWDPIAIDDNWEPLEALLNRWRHDGDGAADGVVVPNAN</sequence>
<dbReference type="EC" id="2.7.7.-" evidence="1"/>
<dbReference type="EC" id="2.7.7.108" evidence="1"/>
<dbReference type="EMBL" id="AY120852">
    <property type="protein sequence ID" value="AAM82657.1"/>
    <property type="molecule type" value="Genomic_DNA"/>
</dbReference>
<dbReference type="EMBL" id="CP000100">
    <property type="protein sequence ID" value="ABB57614.1"/>
    <property type="molecule type" value="Genomic_DNA"/>
</dbReference>
<dbReference type="RefSeq" id="WP_011378097.1">
    <property type="nucleotide sequence ID" value="NZ_JACJTX010000004.1"/>
</dbReference>
<dbReference type="SMR" id="Q8KPU0"/>
<dbReference type="STRING" id="1140.Synpcc7942_1584"/>
<dbReference type="PaxDb" id="1140-Synpcc7942_1584"/>
<dbReference type="KEGG" id="syf:Synpcc7942_1584"/>
<dbReference type="eggNOG" id="COG0397">
    <property type="taxonomic scope" value="Bacteria"/>
</dbReference>
<dbReference type="HOGENOM" id="CLU_010245_0_0_3"/>
<dbReference type="OrthoDB" id="9773505at2"/>
<dbReference type="BioCyc" id="SYNEL:SYNPCC7942_1584-MONOMER"/>
<dbReference type="Proteomes" id="UP000889800">
    <property type="component" value="Chromosome"/>
</dbReference>
<dbReference type="GO" id="GO:0070733">
    <property type="term" value="F:AMPylase activity"/>
    <property type="evidence" value="ECO:0007669"/>
    <property type="project" value="RHEA"/>
</dbReference>
<dbReference type="GO" id="GO:0005524">
    <property type="term" value="F:ATP binding"/>
    <property type="evidence" value="ECO:0007669"/>
    <property type="project" value="UniProtKB-UniRule"/>
</dbReference>
<dbReference type="GO" id="GO:0000287">
    <property type="term" value="F:magnesium ion binding"/>
    <property type="evidence" value="ECO:0007669"/>
    <property type="project" value="UniProtKB-UniRule"/>
</dbReference>
<dbReference type="HAMAP" id="MF_00692">
    <property type="entry name" value="YdiU_SelO"/>
    <property type="match status" value="1"/>
</dbReference>
<dbReference type="InterPro" id="IPR003846">
    <property type="entry name" value="SelO"/>
</dbReference>
<dbReference type="NCBIfam" id="NF000658">
    <property type="entry name" value="PRK00029.1"/>
    <property type="match status" value="1"/>
</dbReference>
<dbReference type="PANTHER" id="PTHR32057">
    <property type="entry name" value="PROTEIN ADENYLYLTRANSFERASE SELO, MITOCHONDRIAL"/>
    <property type="match status" value="1"/>
</dbReference>
<dbReference type="PANTHER" id="PTHR32057:SF14">
    <property type="entry name" value="PROTEIN ADENYLYLTRANSFERASE SELO, MITOCHONDRIAL"/>
    <property type="match status" value="1"/>
</dbReference>
<dbReference type="Pfam" id="PF02696">
    <property type="entry name" value="SelO"/>
    <property type="match status" value="1"/>
</dbReference>